<comment type="function">
    <text evidence="1">Catalyzes the phosphorylation of D-fructose 6-phosphate to fructose 1,6-bisphosphate by ATP, the first committing step of glycolysis.</text>
</comment>
<comment type="catalytic activity">
    <reaction evidence="1">
        <text>beta-D-fructose 6-phosphate + ATP = beta-D-fructose 1,6-bisphosphate + ADP + H(+)</text>
        <dbReference type="Rhea" id="RHEA:16109"/>
        <dbReference type="ChEBI" id="CHEBI:15378"/>
        <dbReference type="ChEBI" id="CHEBI:30616"/>
        <dbReference type="ChEBI" id="CHEBI:32966"/>
        <dbReference type="ChEBI" id="CHEBI:57634"/>
        <dbReference type="ChEBI" id="CHEBI:456216"/>
        <dbReference type="EC" id="2.7.1.11"/>
    </reaction>
</comment>
<comment type="cofactor">
    <cofactor evidence="1">
        <name>Mg(2+)</name>
        <dbReference type="ChEBI" id="CHEBI:18420"/>
    </cofactor>
</comment>
<comment type="activity regulation">
    <text evidence="1">Allosterically activated by ADP and other diphosphonucleosides, and allosterically inhibited by phosphoenolpyruvate.</text>
</comment>
<comment type="pathway">
    <text evidence="1">Carbohydrate degradation; glycolysis; D-glyceraldehyde 3-phosphate and glycerone phosphate from D-glucose: step 3/4.</text>
</comment>
<comment type="subunit">
    <text evidence="1">Homotetramer.</text>
</comment>
<comment type="subcellular location">
    <subcellularLocation>
        <location evidence="1">Cytoplasm</location>
    </subcellularLocation>
</comment>
<comment type="similarity">
    <text evidence="1">Belongs to the phosphofructokinase type A (PFKA) family. ATP-dependent PFK group I subfamily. Prokaryotic clade 'B1' sub-subfamily.</text>
</comment>
<sequence>MIKKIGVLTSGGDAPGMNAAIRGVVRSALTEGLEVMGIYDGYLGLYEDRMVQLDRYSVSDMINRGGTFLGSARFPEFRDENIRAVAIENLKKRGIDALVVIGGDGSYMGAMRLTEMGFPCIGLPGTIDNDIKGTDYTIGFFTALSTVVEAIDRLRDTSSSHQRISVVEVMGRYCGDLTLAAAIAGGCEFVVVPEVEFSREDLVNEIKAGIAKGKKHAIVAITEHMCDVDELAHFIEKETGRETRATVLGHIQRGGSPVPYDRILASRMGAYAIDLLLAGYGGRCVGIQNEQLVHHDIIDAIENMKRPFKGDWLDCAKKLY</sequence>
<proteinExistence type="inferred from homology"/>
<protein>
    <recommendedName>
        <fullName evidence="1">ATP-dependent 6-phosphofructokinase isozyme 1</fullName>
        <shortName evidence="1">ATP-PFK 1</shortName>
        <shortName evidence="1">Phosphofructokinase 1</shortName>
        <ecNumber evidence="1">2.7.1.11</ecNumber>
    </recommendedName>
    <alternativeName>
        <fullName>6-phosphofructokinase isozyme I</fullName>
    </alternativeName>
    <alternativeName>
        <fullName evidence="1">Phosphohexokinase 1</fullName>
    </alternativeName>
</protein>
<name>PFKA_ECOHS</name>
<reference key="1">
    <citation type="journal article" date="2008" name="J. Bacteriol.">
        <title>The pangenome structure of Escherichia coli: comparative genomic analysis of E. coli commensal and pathogenic isolates.</title>
        <authorList>
            <person name="Rasko D.A."/>
            <person name="Rosovitz M.J."/>
            <person name="Myers G.S.A."/>
            <person name="Mongodin E.F."/>
            <person name="Fricke W.F."/>
            <person name="Gajer P."/>
            <person name="Crabtree J."/>
            <person name="Sebaihia M."/>
            <person name="Thomson N.R."/>
            <person name="Chaudhuri R."/>
            <person name="Henderson I.R."/>
            <person name="Sperandio V."/>
            <person name="Ravel J."/>
        </authorList>
    </citation>
    <scope>NUCLEOTIDE SEQUENCE [LARGE SCALE GENOMIC DNA]</scope>
    <source>
        <strain>HS</strain>
    </source>
</reference>
<evidence type="ECO:0000255" key="1">
    <source>
        <dbReference type="HAMAP-Rule" id="MF_00339"/>
    </source>
</evidence>
<accession>A8A720</accession>
<dbReference type="EC" id="2.7.1.11" evidence="1"/>
<dbReference type="EMBL" id="CP000802">
    <property type="protein sequence ID" value="ABV08324.1"/>
    <property type="molecule type" value="Genomic_DNA"/>
</dbReference>
<dbReference type="RefSeq" id="WP_000591795.1">
    <property type="nucleotide sequence ID" value="NC_009800.1"/>
</dbReference>
<dbReference type="SMR" id="A8A720"/>
<dbReference type="GeneID" id="93777982"/>
<dbReference type="KEGG" id="ecx:EcHS_A4146"/>
<dbReference type="HOGENOM" id="CLU_020655_0_1_6"/>
<dbReference type="UniPathway" id="UPA00109">
    <property type="reaction ID" value="UER00182"/>
</dbReference>
<dbReference type="GO" id="GO:0005945">
    <property type="term" value="C:6-phosphofructokinase complex"/>
    <property type="evidence" value="ECO:0007669"/>
    <property type="project" value="TreeGrafter"/>
</dbReference>
<dbReference type="GO" id="GO:0003872">
    <property type="term" value="F:6-phosphofructokinase activity"/>
    <property type="evidence" value="ECO:0007669"/>
    <property type="project" value="UniProtKB-UniRule"/>
</dbReference>
<dbReference type="GO" id="GO:0016208">
    <property type="term" value="F:AMP binding"/>
    <property type="evidence" value="ECO:0007669"/>
    <property type="project" value="TreeGrafter"/>
</dbReference>
<dbReference type="GO" id="GO:0005524">
    <property type="term" value="F:ATP binding"/>
    <property type="evidence" value="ECO:0007669"/>
    <property type="project" value="UniProtKB-KW"/>
</dbReference>
<dbReference type="GO" id="GO:0070095">
    <property type="term" value="F:fructose-6-phosphate binding"/>
    <property type="evidence" value="ECO:0007669"/>
    <property type="project" value="TreeGrafter"/>
</dbReference>
<dbReference type="GO" id="GO:0042802">
    <property type="term" value="F:identical protein binding"/>
    <property type="evidence" value="ECO:0007669"/>
    <property type="project" value="TreeGrafter"/>
</dbReference>
<dbReference type="GO" id="GO:0046872">
    <property type="term" value="F:metal ion binding"/>
    <property type="evidence" value="ECO:0007669"/>
    <property type="project" value="UniProtKB-KW"/>
</dbReference>
<dbReference type="GO" id="GO:0048029">
    <property type="term" value="F:monosaccharide binding"/>
    <property type="evidence" value="ECO:0007669"/>
    <property type="project" value="TreeGrafter"/>
</dbReference>
<dbReference type="GO" id="GO:0061621">
    <property type="term" value="P:canonical glycolysis"/>
    <property type="evidence" value="ECO:0007669"/>
    <property type="project" value="TreeGrafter"/>
</dbReference>
<dbReference type="GO" id="GO:0030388">
    <property type="term" value="P:fructose 1,6-bisphosphate metabolic process"/>
    <property type="evidence" value="ECO:0007669"/>
    <property type="project" value="TreeGrafter"/>
</dbReference>
<dbReference type="GO" id="GO:0006002">
    <property type="term" value="P:fructose 6-phosphate metabolic process"/>
    <property type="evidence" value="ECO:0007669"/>
    <property type="project" value="InterPro"/>
</dbReference>
<dbReference type="CDD" id="cd00763">
    <property type="entry name" value="Bacterial_PFK"/>
    <property type="match status" value="1"/>
</dbReference>
<dbReference type="FunFam" id="3.40.50.450:FF:000001">
    <property type="entry name" value="ATP-dependent 6-phosphofructokinase"/>
    <property type="match status" value="1"/>
</dbReference>
<dbReference type="FunFam" id="3.40.50.460:FF:000002">
    <property type="entry name" value="ATP-dependent 6-phosphofructokinase"/>
    <property type="match status" value="1"/>
</dbReference>
<dbReference type="Gene3D" id="3.40.50.450">
    <property type="match status" value="1"/>
</dbReference>
<dbReference type="Gene3D" id="3.40.50.460">
    <property type="entry name" value="Phosphofructokinase domain"/>
    <property type="match status" value="1"/>
</dbReference>
<dbReference type="HAMAP" id="MF_00339">
    <property type="entry name" value="Phosphofructokinase_I_B1"/>
    <property type="match status" value="1"/>
</dbReference>
<dbReference type="InterPro" id="IPR022953">
    <property type="entry name" value="ATP_PFK"/>
</dbReference>
<dbReference type="InterPro" id="IPR012003">
    <property type="entry name" value="ATP_PFK_prok-type"/>
</dbReference>
<dbReference type="InterPro" id="IPR012828">
    <property type="entry name" value="PFKA_ATP_prok"/>
</dbReference>
<dbReference type="InterPro" id="IPR015912">
    <property type="entry name" value="Phosphofructokinase_CS"/>
</dbReference>
<dbReference type="InterPro" id="IPR000023">
    <property type="entry name" value="Phosphofructokinase_dom"/>
</dbReference>
<dbReference type="InterPro" id="IPR035966">
    <property type="entry name" value="PKF_sf"/>
</dbReference>
<dbReference type="NCBIfam" id="TIGR02482">
    <property type="entry name" value="PFKA_ATP"/>
    <property type="match status" value="1"/>
</dbReference>
<dbReference type="NCBIfam" id="NF002872">
    <property type="entry name" value="PRK03202.1"/>
    <property type="match status" value="1"/>
</dbReference>
<dbReference type="PANTHER" id="PTHR13697:SF4">
    <property type="entry name" value="ATP-DEPENDENT 6-PHOSPHOFRUCTOKINASE"/>
    <property type="match status" value="1"/>
</dbReference>
<dbReference type="PANTHER" id="PTHR13697">
    <property type="entry name" value="PHOSPHOFRUCTOKINASE"/>
    <property type="match status" value="1"/>
</dbReference>
<dbReference type="Pfam" id="PF00365">
    <property type="entry name" value="PFK"/>
    <property type="match status" value="1"/>
</dbReference>
<dbReference type="PIRSF" id="PIRSF000532">
    <property type="entry name" value="ATP_PFK_prok"/>
    <property type="match status" value="1"/>
</dbReference>
<dbReference type="PRINTS" id="PR00476">
    <property type="entry name" value="PHFRCTKINASE"/>
</dbReference>
<dbReference type="SUPFAM" id="SSF53784">
    <property type="entry name" value="Phosphofructokinase"/>
    <property type="match status" value="1"/>
</dbReference>
<dbReference type="PROSITE" id="PS00433">
    <property type="entry name" value="PHOSPHOFRUCTOKINASE"/>
    <property type="match status" value="1"/>
</dbReference>
<keyword id="KW-0021">Allosteric enzyme</keyword>
<keyword id="KW-0067">ATP-binding</keyword>
<keyword id="KW-0963">Cytoplasm</keyword>
<keyword id="KW-0324">Glycolysis</keyword>
<keyword id="KW-0418">Kinase</keyword>
<keyword id="KW-0460">Magnesium</keyword>
<keyword id="KW-0479">Metal-binding</keyword>
<keyword id="KW-0547">Nucleotide-binding</keyword>
<keyword id="KW-0808">Transferase</keyword>
<organism>
    <name type="scientific">Escherichia coli O9:H4 (strain HS)</name>
    <dbReference type="NCBI Taxonomy" id="331112"/>
    <lineage>
        <taxon>Bacteria</taxon>
        <taxon>Pseudomonadati</taxon>
        <taxon>Pseudomonadota</taxon>
        <taxon>Gammaproteobacteria</taxon>
        <taxon>Enterobacterales</taxon>
        <taxon>Enterobacteriaceae</taxon>
        <taxon>Escherichia</taxon>
    </lineage>
</organism>
<feature type="chain" id="PRO_1000059758" description="ATP-dependent 6-phosphofructokinase isozyme 1">
    <location>
        <begin position="1"/>
        <end position="320"/>
    </location>
</feature>
<feature type="active site" description="Proton acceptor" evidence="1">
    <location>
        <position position="128"/>
    </location>
</feature>
<feature type="binding site" evidence="1">
    <location>
        <position position="12"/>
    </location>
    <ligand>
        <name>ATP</name>
        <dbReference type="ChEBI" id="CHEBI:30616"/>
    </ligand>
</feature>
<feature type="binding site" evidence="1">
    <location>
        <begin position="22"/>
        <end position="26"/>
    </location>
    <ligand>
        <name>ADP</name>
        <dbReference type="ChEBI" id="CHEBI:456216"/>
        <note>allosteric activator; ligand shared between dimeric partners</note>
    </ligand>
</feature>
<feature type="binding site" evidence="1">
    <location>
        <begin position="55"/>
        <end position="60"/>
    </location>
    <ligand>
        <name>ADP</name>
        <dbReference type="ChEBI" id="CHEBI:456216"/>
        <note>allosteric activator; ligand shared between dimeric partners</note>
    </ligand>
</feature>
<feature type="binding site" evidence="1">
    <location>
        <begin position="73"/>
        <end position="74"/>
    </location>
    <ligand>
        <name>ATP</name>
        <dbReference type="ChEBI" id="CHEBI:30616"/>
    </ligand>
</feature>
<feature type="binding site" evidence="1">
    <location>
        <begin position="103"/>
        <end position="106"/>
    </location>
    <ligand>
        <name>ATP</name>
        <dbReference type="ChEBI" id="CHEBI:30616"/>
    </ligand>
</feature>
<feature type="binding site" evidence="1">
    <location>
        <position position="104"/>
    </location>
    <ligand>
        <name>Mg(2+)</name>
        <dbReference type="ChEBI" id="CHEBI:18420"/>
        <note>catalytic</note>
    </ligand>
</feature>
<feature type="binding site" description="in other chain" evidence="1">
    <location>
        <begin position="126"/>
        <end position="128"/>
    </location>
    <ligand>
        <name>substrate</name>
        <note>ligand shared between dimeric partners</note>
    </ligand>
</feature>
<feature type="binding site" description="in other chain" evidence="1">
    <location>
        <position position="155"/>
    </location>
    <ligand>
        <name>ADP</name>
        <dbReference type="ChEBI" id="CHEBI:456216"/>
        <note>allosteric activator; ligand shared between dimeric partners</note>
    </ligand>
</feature>
<feature type="binding site" evidence="1">
    <location>
        <position position="163"/>
    </location>
    <ligand>
        <name>substrate</name>
        <note>ligand shared between dimeric partners</note>
    </ligand>
</feature>
<feature type="binding site" description="in other chain" evidence="1">
    <location>
        <begin position="170"/>
        <end position="172"/>
    </location>
    <ligand>
        <name>substrate</name>
        <note>ligand shared between dimeric partners</note>
    </ligand>
</feature>
<feature type="binding site" description="in other chain" evidence="1">
    <location>
        <begin position="186"/>
        <end position="188"/>
    </location>
    <ligand>
        <name>ADP</name>
        <dbReference type="ChEBI" id="CHEBI:456216"/>
        <note>allosteric activator; ligand shared between dimeric partners</note>
    </ligand>
</feature>
<feature type="binding site" description="in other chain" evidence="1">
    <location>
        <position position="212"/>
    </location>
    <ligand>
        <name>ADP</name>
        <dbReference type="ChEBI" id="CHEBI:456216"/>
        <note>allosteric activator; ligand shared between dimeric partners</note>
    </ligand>
</feature>
<feature type="binding site" description="in other chain" evidence="1">
    <location>
        <begin position="214"/>
        <end position="216"/>
    </location>
    <ligand>
        <name>ADP</name>
        <dbReference type="ChEBI" id="CHEBI:456216"/>
        <note>allosteric activator; ligand shared between dimeric partners</note>
    </ligand>
</feature>
<feature type="binding site" description="in other chain" evidence="1">
    <location>
        <position position="223"/>
    </location>
    <ligand>
        <name>substrate</name>
        <note>ligand shared between dimeric partners</note>
    </ligand>
</feature>
<feature type="binding site" evidence="1">
    <location>
        <position position="244"/>
    </location>
    <ligand>
        <name>substrate</name>
        <note>ligand shared between dimeric partners</note>
    </ligand>
</feature>
<feature type="binding site" description="in other chain" evidence="1">
    <location>
        <begin position="250"/>
        <end position="253"/>
    </location>
    <ligand>
        <name>substrate</name>
        <note>ligand shared between dimeric partners</note>
    </ligand>
</feature>
<gene>
    <name evidence="1" type="primary">pfkA</name>
    <name type="ordered locus">EcHS_A4146</name>
</gene>